<name>B3GT6_HUMAN</name>
<keyword id="KW-0225">Disease variant</keyword>
<keyword id="KW-0242">Dwarfism</keyword>
<keyword id="KW-0248">Ehlers-Danlos syndrome</keyword>
<keyword id="KW-0325">Glycoprotein</keyword>
<keyword id="KW-0328">Glycosyltransferase</keyword>
<keyword id="KW-0333">Golgi apparatus</keyword>
<keyword id="KW-0464">Manganese</keyword>
<keyword id="KW-0472">Membrane</keyword>
<keyword id="KW-1267">Proteomics identification</keyword>
<keyword id="KW-1185">Reference proteome</keyword>
<keyword id="KW-0735">Signal-anchor</keyword>
<keyword id="KW-0808">Transferase</keyword>
<keyword id="KW-0812">Transmembrane</keyword>
<keyword id="KW-1133">Transmembrane helix</keyword>
<evidence type="ECO:0000255" key="1"/>
<evidence type="ECO:0000269" key="2">
    <source>
    </source>
</evidence>
<evidence type="ECO:0000269" key="3">
    <source>
    </source>
</evidence>
<evidence type="ECO:0000269" key="4">
    <source>
    </source>
</evidence>
<evidence type="ECO:0000269" key="5">
    <source>
    </source>
</evidence>
<evidence type="ECO:0000269" key="6">
    <source>
    </source>
</evidence>
<evidence type="ECO:0000269" key="7">
    <source>
    </source>
</evidence>
<evidence type="ECO:0000269" key="8">
    <source>
    </source>
</evidence>
<evidence type="ECO:0000269" key="9">
    <source>
    </source>
</evidence>
<evidence type="ECO:0000269" key="10">
    <source>
    </source>
</evidence>
<evidence type="ECO:0000269" key="11">
    <source>
    </source>
</evidence>
<evidence type="ECO:0000269" key="12">
    <source>
    </source>
</evidence>
<evidence type="ECO:0000303" key="13">
    <source>
    </source>
</evidence>
<evidence type="ECO:0000305" key="14"/>
<evidence type="ECO:0000305" key="15">
    <source>
    </source>
</evidence>
<comment type="function">
    <text evidence="2 3 9">Beta-1,3-galactosyltransferase that transfers galactose from UDP-galactose to substrates with a terminal beta-linked galactose residue. Has a preference for galactose-beta-1,4-xylose that is found in the linker region of glycosaminoglycans, such as heparan sulfate and chondroitin sulfate. Has no activity towards substrates with terminal glucosamine or galactosamine residues.</text>
</comment>
<comment type="catalytic activity">
    <reaction evidence="2 3">
        <text>3-O-(beta-D-galactosyl-(1-&gt;4)-beta-D-xylosyl)-L-seryl-[protein] + UDP-alpha-D-galactose = 3-O-(beta-D-galactosyl-(1-&gt;3)-beta-D-galactosyl-(1-&gt;4)-beta-D-xylosyl)-L-seryl-[protein] + UDP + H(+)</text>
        <dbReference type="Rhea" id="RHEA:11780"/>
        <dbReference type="Rhea" id="RHEA-COMP:12570"/>
        <dbReference type="Rhea" id="RHEA-COMP:12571"/>
        <dbReference type="ChEBI" id="CHEBI:15378"/>
        <dbReference type="ChEBI" id="CHEBI:58223"/>
        <dbReference type="ChEBI" id="CHEBI:66914"/>
        <dbReference type="ChEBI" id="CHEBI:132088"/>
        <dbReference type="ChEBI" id="CHEBI:132090"/>
        <dbReference type="EC" id="2.4.1.134"/>
    </reaction>
    <physiologicalReaction direction="left-to-right" evidence="2">
        <dbReference type="Rhea" id="RHEA:11781"/>
    </physiologicalReaction>
</comment>
<comment type="cofactor">
    <cofactor evidence="12">
        <name>Mn(2+)</name>
        <dbReference type="ChEBI" id="CHEBI:29035"/>
    </cofactor>
</comment>
<comment type="pathway">
    <text evidence="2">Glycan metabolism; chondroitin sulfate biosynthesis.</text>
</comment>
<comment type="pathway">
    <text evidence="2">Glycan metabolism; heparan sulfate biosynthesis.</text>
</comment>
<comment type="subcellular location">
    <subcellularLocation>
        <location evidence="2 9">Golgi apparatus</location>
        <location evidence="2 9">Golgi stack membrane</location>
        <topology evidence="2">Single-pass type II membrane protein</topology>
    </subcellularLocation>
</comment>
<comment type="tissue specificity">
    <text evidence="2">Ubiquitous.</text>
</comment>
<comment type="disease" evidence="3 5 9 10 11">
    <disease id="DI-03844">
        <name>Ehlers-Danlos syndrome, spondylodysplastic type, 2</name>
        <acronym>EDSSPD2</acronym>
        <description>A form of Ehlers-Danlos syndrome, a group of connective tissue disorders characterized by skin hyperextensibility, articular hypermobility, and tissue fragility. EDSSPD2 is an autosomal recessive form characterized by an aged appearance, developmental delay, short stature, craniofacial disproportion, generalized osteopenia, defective wound healing, hypermobile joints, hypotonic muscles, and loose but elastic skin.</description>
        <dbReference type="MIM" id="615349"/>
    </disease>
    <text>The disease is caused by variants affecting the gene represented in this entry.</text>
</comment>
<comment type="disease" evidence="3 4 5 7 8 9 10">
    <disease id="DI-03845">
        <name>Spondyloepimetaphyseal dysplasia with joint laxity, 1, with or without fractures</name>
        <acronym>SEMDJL1</acronym>
        <description>A bone disease characterized by vertebral abnormalities and ligamentous laxity that result in spinal misalignment and progressive severe kyphoscoliosis, thoracic asymmetry, and respiratory compromise resulting in early death. Additional skeletal features include elbow deformities with radial head dislocation, dislocated hips, clubfeet, and tapered fingers with spatulate distal phalanges. Many affected children have an oval face, flat midface, prominent eyes with blue sclerae, and a long philtrum. Palatal abnormalities and congenital heart disease are also observed.</description>
        <dbReference type="MIM" id="271640"/>
    </disease>
    <text>The disease is caused by variants affecting the gene represented in this entry.</text>
</comment>
<comment type="disease" evidence="6 9">
    <disease id="DI-05819">
        <name>Al-Gazali syndrome</name>
        <acronym>ALGAZ</acronym>
        <description>A severe disorder characterized by prenatal growth retardation, large joints contractures, camptodactyly, bilateral talipes equinovarus, small mouth, anterior segment anomalies of the eyes, and early lethality. The transmission pattern of the disorder is consistent with autosomal recessive inheritance.</description>
        <dbReference type="MIM" id="609465"/>
    </disease>
    <text>The disease is caused by variants affecting the gene represented in this entry.</text>
</comment>
<comment type="similarity">
    <text evidence="14">Belongs to the glycosyltransferase 31 family.</text>
</comment>
<comment type="caution">
    <text evidence="14">PubMed:9892646 describes the wrong protein; the cDNAs used had been switched inadvertently.</text>
</comment>
<comment type="online information" name="Functional Glycomics Gateway - GTase">
    <link uri="http://www.functionalglycomics.org/glycomics/molecule/jsp/glycoEnzyme/viewGlycoEnzyme.jsp?gbpId=gt_hum_433"/>
    <text>Beta-1,3-galactosyltransferase 6</text>
</comment>
<gene>
    <name type="primary">B3GALT6</name>
</gene>
<protein>
    <recommendedName>
        <fullName evidence="15">Beta-1,3-galactosyltransferase 6</fullName>
        <shortName>Beta-1,3-GalTase 6</shortName>
        <shortName>Beta3Gal-T6</shortName>
        <shortName evidence="13">Beta3GalT6</shortName>
        <ecNumber evidence="2 3">2.4.1.134</ecNumber>
    </recommendedName>
    <alternativeName>
        <fullName>GAG GalTII</fullName>
    </alternativeName>
    <alternativeName>
        <fullName>Galactosyltransferase II</fullName>
    </alternativeName>
    <alternativeName>
        <fullName>Galactosylxylosylprotein 3-beta-galactosyltransferase</fullName>
    </alternativeName>
    <alternativeName>
        <fullName>UDP-Gal:betaGal beta 1,3-galactosyltransferase polypeptide 6</fullName>
    </alternativeName>
</protein>
<accession>Q96L58</accession>
<accession>Q5T7M5</accession>
<proteinExistence type="evidence at protein level"/>
<dbReference type="EC" id="2.4.1.134" evidence="2 3"/>
<dbReference type="EMBL" id="AY050570">
    <property type="protein sequence ID" value="AAL11442.1"/>
    <property type="molecule type" value="mRNA"/>
</dbReference>
<dbReference type="EMBL" id="AL162741">
    <property type="status" value="NOT_ANNOTATED_CDS"/>
    <property type="molecule type" value="Genomic_DNA"/>
</dbReference>
<dbReference type="CCDS" id="CCDS13.1"/>
<dbReference type="RefSeq" id="NP_542172.2">
    <property type="nucleotide sequence ID" value="NM_080605.4"/>
</dbReference>
<dbReference type="SMR" id="Q96L58"/>
<dbReference type="BioGRID" id="126016">
    <property type="interactions" value="36"/>
</dbReference>
<dbReference type="FunCoup" id="Q96L58">
    <property type="interactions" value="1133"/>
</dbReference>
<dbReference type="IntAct" id="Q96L58">
    <property type="interactions" value="14"/>
</dbReference>
<dbReference type="STRING" id="9606.ENSP00000368496"/>
<dbReference type="CAZy" id="GT31">
    <property type="family name" value="Glycosyltransferase Family 31"/>
</dbReference>
<dbReference type="GlyConnect" id="1030">
    <property type="glycosylation" value="2 N-Linked glycans (1 site)"/>
</dbReference>
<dbReference type="GlyCosmos" id="Q96L58">
    <property type="glycosylation" value="1 site, 2 glycans"/>
</dbReference>
<dbReference type="GlyGen" id="Q96L58">
    <property type="glycosylation" value="2 sites, 6 N-linked glycans (1 site), 2 O-linked glycans (1 site)"/>
</dbReference>
<dbReference type="iPTMnet" id="Q96L58"/>
<dbReference type="PhosphoSitePlus" id="Q96L58"/>
<dbReference type="SwissPalm" id="Q96L58"/>
<dbReference type="BioMuta" id="B3GALT6"/>
<dbReference type="DMDM" id="61211870"/>
<dbReference type="jPOST" id="Q96L58"/>
<dbReference type="MassIVE" id="Q96L58"/>
<dbReference type="PaxDb" id="9606-ENSP00000368496"/>
<dbReference type="PeptideAtlas" id="Q96L58"/>
<dbReference type="ProteomicsDB" id="77152"/>
<dbReference type="Pumba" id="Q96L58"/>
<dbReference type="Antibodypedia" id="26175">
    <property type="antibodies" value="164 antibodies from 26 providers"/>
</dbReference>
<dbReference type="DNASU" id="126792"/>
<dbReference type="Ensembl" id="ENST00000379198.5">
    <property type="protein sequence ID" value="ENSP00000368496.2"/>
    <property type="gene ID" value="ENSG00000176022.7"/>
</dbReference>
<dbReference type="GeneID" id="126792"/>
<dbReference type="KEGG" id="hsa:126792"/>
<dbReference type="MANE-Select" id="ENST00000379198.5">
    <property type="protein sequence ID" value="ENSP00000368496.2"/>
    <property type="RefSeq nucleotide sequence ID" value="NM_080605.4"/>
    <property type="RefSeq protein sequence ID" value="NP_542172.2"/>
</dbReference>
<dbReference type="UCSC" id="uc001adk.4">
    <property type="organism name" value="human"/>
</dbReference>
<dbReference type="AGR" id="HGNC:17978"/>
<dbReference type="CTD" id="126792"/>
<dbReference type="DisGeNET" id="126792"/>
<dbReference type="GeneCards" id="B3GALT6"/>
<dbReference type="HGNC" id="HGNC:17978">
    <property type="gene designation" value="B3GALT6"/>
</dbReference>
<dbReference type="HPA" id="ENSG00000176022">
    <property type="expression patterns" value="Low tissue specificity"/>
</dbReference>
<dbReference type="MalaCards" id="B3GALT6"/>
<dbReference type="MIM" id="271640">
    <property type="type" value="phenotype"/>
</dbReference>
<dbReference type="MIM" id="609465">
    <property type="type" value="phenotype"/>
</dbReference>
<dbReference type="MIM" id="615291">
    <property type="type" value="gene"/>
</dbReference>
<dbReference type="MIM" id="615349">
    <property type="type" value="phenotype"/>
</dbReference>
<dbReference type="neXtProt" id="NX_Q96L58"/>
<dbReference type="OpenTargets" id="ENSG00000176022"/>
<dbReference type="Orphanet" id="536467">
    <property type="disease" value="B3GALT6-related spondylodysplastic Ehlers-Danlos syndrome"/>
</dbReference>
<dbReference type="Orphanet" id="642099">
    <property type="disease" value="Spondyloepimetaphyseal dysplasia with joint laxity, Beighton type"/>
</dbReference>
<dbReference type="PharmGKB" id="PA25214"/>
<dbReference type="VEuPathDB" id="HostDB:ENSG00000176022"/>
<dbReference type="eggNOG" id="KOG2288">
    <property type="taxonomic scope" value="Eukaryota"/>
</dbReference>
<dbReference type="GeneTree" id="ENSGT00940000162229"/>
<dbReference type="HOGENOM" id="CLU_046589_0_0_1"/>
<dbReference type="InParanoid" id="Q96L58"/>
<dbReference type="OMA" id="LKPSHGW"/>
<dbReference type="OrthoDB" id="1158011at2759"/>
<dbReference type="PAN-GO" id="Q96L58">
    <property type="GO annotations" value="3 GO annotations based on evolutionary models"/>
</dbReference>
<dbReference type="PhylomeDB" id="Q96L58"/>
<dbReference type="TreeFam" id="TF314311"/>
<dbReference type="BioCyc" id="MetaCyc:HS10991-MONOMER"/>
<dbReference type="BRENDA" id="2.4.1.134">
    <property type="organism ID" value="2681"/>
</dbReference>
<dbReference type="PathwayCommons" id="Q96L58"/>
<dbReference type="Reactome" id="R-HSA-1971475">
    <property type="pathway name" value="A tetrasaccharide linker sequence is required for GAG synthesis"/>
</dbReference>
<dbReference type="Reactome" id="R-HSA-4420332">
    <property type="pathway name" value="Defective B3GALT6 causes EDSP2 and SEMDJL1"/>
</dbReference>
<dbReference type="SignaLink" id="Q96L58"/>
<dbReference type="UniPathway" id="UPA00755"/>
<dbReference type="UniPathway" id="UPA00756"/>
<dbReference type="BioGRID-ORCS" id="126792">
    <property type="hits" value="43 hits in 1152 CRISPR screens"/>
</dbReference>
<dbReference type="ChiTaRS" id="B3GALT6">
    <property type="organism name" value="human"/>
</dbReference>
<dbReference type="GenomeRNAi" id="126792"/>
<dbReference type="Pharos" id="Q96L58">
    <property type="development level" value="Tbio"/>
</dbReference>
<dbReference type="PRO" id="PR:Q96L58"/>
<dbReference type="Proteomes" id="UP000005640">
    <property type="component" value="Chromosome 1"/>
</dbReference>
<dbReference type="RNAct" id="Q96L58">
    <property type="molecule type" value="protein"/>
</dbReference>
<dbReference type="Bgee" id="ENSG00000176022">
    <property type="expression patterns" value="Expressed in Brodmann (1909) area 23 and 180 other cell types or tissues"/>
</dbReference>
<dbReference type="GO" id="GO:0005794">
    <property type="term" value="C:Golgi apparatus"/>
    <property type="evidence" value="ECO:0000315"/>
    <property type="project" value="UniProtKB"/>
</dbReference>
<dbReference type="GO" id="GO:0032580">
    <property type="term" value="C:Golgi cisterna membrane"/>
    <property type="evidence" value="ECO:0007669"/>
    <property type="project" value="UniProtKB-SubCell"/>
</dbReference>
<dbReference type="GO" id="GO:0005797">
    <property type="term" value="C:Golgi medial cisterna"/>
    <property type="evidence" value="ECO:0000314"/>
    <property type="project" value="UniProtKB"/>
</dbReference>
<dbReference type="GO" id="GO:0000139">
    <property type="term" value="C:Golgi membrane"/>
    <property type="evidence" value="ECO:0000318"/>
    <property type="project" value="GO_Central"/>
</dbReference>
<dbReference type="GO" id="GO:0016020">
    <property type="term" value="C:membrane"/>
    <property type="evidence" value="ECO:0007005"/>
    <property type="project" value="UniProtKB"/>
</dbReference>
<dbReference type="GO" id="GO:0047220">
    <property type="term" value="F:galactosylxylosylprotein 3-beta-galactosyltransferase activity"/>
    <property type="evidence" value="ECO:0000315"/>
    <property type="project" value="UniProtKB"/>
</dbReference>
<dbReference type="GO" id="GO:0035250">
    <property type="term" value="F:UDP-galactosyltransferase activity"/>
    <property type="evidence" value="ECO:0000314"/>
    <property type="project" value="UniProtKB"/>
</dbReference>
<dbReference type="GO" id="GO:0050650">
    <property type="term" value="P:chondroitin sulfate proteoglycan biosynthetic process"/>
    <property type="evidence" value="ECO:0000315"/>
    <property type="project" value="FlyBase"/>
</dbReference>
<dbReference type="GO" id="GO:0050651">
    <property type="term" value="P:dermatan sulfate proteoglycan biosynthetic process"/>
    <property type="evidence" value="ECO:0000315"/>
    <property type="project" value="FlyBase"/>
</dbReference>
<dbReference type="GO" id="GO:0006024">
    <property type="term" value="P:glycosaminoglycan biosynthetic process"/>
    <property type="evidence" value="ECO:0000315"/>
    <property type="project" value="UniProtKB"/>
</dbReference>
<dbReference type="GO" id="GO:0030203">
    <property type="term" value="P:glycosaminoglycan metabolic process"/>
    <property type="evidence" value="ECO:0000304"/>
    <property type="project" value="Reactome"/>
</dbReference>
<dbReference type="GO" id="GO:0015012">
    <property type="term" value="P:heparan sulfate proteoglycan biosynthetic process"/>
    <property type="evidence" value="ECO:0000315"/>
    <property type="project" value="FlyBase"/>
</dbReference>
<dbReference type="GO" id="GO:0006493">
    <property type="term" value="P:protein O-linked glycosylation"/>
    <property type="evidence" value="ECO:0000318"/>
    <property type="project" value="GO_Central"/>
</dbReference>
<dbReference type="GO" id="GO:0030166">
    <property type="term" value="P:proteoglycan biosynthetic process"/>
    <property type="evidence" value="ECO:0000315"/>
    <property type="project" value="UniProtKB"/>
</dbReference>
<dbReference type="FunFam" id="3.90.550.50:FF:000018">
    <property type="entry name" value="Hexosyltransferase"/>
    <property type="match status" value="1"/>
</dbReference>
<dbReference type="Gene3D" id="3.90.550.50">
    <property type="match status" value="1"/>
</dbReference>
<dbReference type="InterPro" id="IPR002659">
    <property type="entry name" value="Glyco_trans_31"/>
</dbReference>
<dbReference type="PANTHER" id="PTHR11214:SF3">
    <property type="entry name" value="BETA-1,3-GALACTOSYLTRANSFERASE 6"/>
    <property type="match status" value="1"/>
</dbReference>
<dbReference type="PANTHER" id="PTHR11214">
    <property type="entry name" value="BETA-1,3-N-ACETYLGLUCOSAMINYLTRANSFERASE"/>
    <property type="match status" value="1"/>
</dbReference>
<dbReference type="Pfam" id="PF01762">
    <property type="entry name" value="Galactosyl_T"/>
    <property type="match status" value="1"/>
</dbReference>
<reference key="1">
    <citation type="journal article" date="2001" name="J. Biol. Chem.">
        <title>Biosynthesis of the linkage region of glycosaminoglycans: cloning and activity of galactosyltransferase II, the sixth member of the beta 1,3-galactosyltransferase family (beta 3GalT6).</title>
        <authorList>
            <person name="Bai X."/>
            <person name="Zhou D."/>
            <person name="Brown J.R."/>
            <person name="Crawford B.E."/>
            <person name="Hennet T."/>
            <person name="Esko J.D."/>
        </authorList>
    </citation>
    <scope>NUCLEOTIDE SEQUENCE [MRNA]</scope>
    <scope>FUNCTION</scope>
    <scope>CATALYTIC ACTIVITY</scope>
    <scope>PATHWAY</scope>
    <scope>SUBCELLULAR LOCATION</scope>
    <scope>TISSUE SPECIFICITY</scope>
    <source>
        <tissue>Fetal brain</tissue>
    </source>
</reference>
<reference key="2">
    <citation type="journal article" date="2006" name="Nature">
        <title>The DNA sequence and biological annotation of human chromosome 1.</title>
        <authorList>
            <person name="Gregory S.G."/>
            <person name="Barlow K.F."/>
            <person name="McLay K.E."/>
            <person name="Kaul R."/>
            <person name="Swarbreck D."/>
            <person name="Dunham A."/>
            <person name="Scott C.E."/>
            <person name="Howe K.L."/>
            <person name="Woodfine K."/>
            <person name="Spencer C.C.A."/>
            <person name="Jones M.C."/>
            <person name="Gillson C."/>
            <person name="Searle S."/>
            <person name="Zhou Y."/>
            <person name="Kokocinski F."/>
            <person name="McDonald L."/>
            <person name="Evans R."/>
            <person name="Phillips K."/>
            <person name="Atkinson A."/>
            <person name="Cooper R."/>
            <person name="Jones C."/>
            <person name="Hall R.E."/>
            <person name="Andrews T.D."/>
            <person name="Lloyd C."/>
            <person name="Ainscough R."/>
            <person name="Almeida J.P."/>
            <person name="Ambrose K.D."/>
            <person name="Anderson F."/>
            <person name="Andrew R.W."/>
            <person name="Ashwell R.I.S."/>
            <person name="Aubin K."/>
            <person name="Babbage A.K."/>
            <person name="Bagguley C.L."/>
            <person name="Bailey J."/>
            <person name="Beasley H."/>
            <person name="Bethel G."/>
            <person name="Bird C.P."/>
            <person name="Bray-Allen S."/>
            <person name="Brown J.Y."/>
            <person name="Brown A.J."/>
            <person name="Buckley D."/>
            <person name="Burton J."/>
            <person name="Bye J."/>
            <person name="Carder C."/>
            <person name="Chapman J.C."/>
            <person name="Clark S.Y."/>
            <person name="Clarke G."/>
            <person name="Clee C."/>
            <person name="Cobley V."/>
            <person name="Collier R.E."/>
            <person name="Corby N."/>
            <person name="Coville G.J."/>
            <person name="Davies J."/>
            <person name="Deadman R."/>
            <person name="Dunn M."/>
            <person name="Earthrowl M."/>
            <person name="Ellington A.G."/>
            <person name="Errington H."/>
            <person name="Frankish A."/>
            <person name="Frankland J."/>
            <person name="French L."/>
            <person name="Garner P."/>
            <person name="Garnett J."/>
            <person name="Gay L."/>
            <person name="Ghori M.R.J."/>
            <person name="Gibson R."/>
            <person name="Gilby L.M."/>
            <person name="Gillett W."/>
            <person name="Glithero R.J."/>
            <person name="Grafham D.V."/>
            <person name="Griffiths C."/>
            <person name="Griffiths-Jones S."/>
            <person name="Grocock R."/>
            <person name="Hammond S."/>
            <person name="Harrison E.S.I."/>
            <person name="Hart E."/>
            <person name="Haugen E."/>
            <person name="Heath P.D."/>
            <person name="Holmes S."/>
            <person name="Holt K."/>
            <person name="Howden P.J."/>
            <person name="Hunt A.R."/>
            <person name="Hunt S.E."/>
            <person name="Hunter G."/>
            <person name="Isherwood J."/>
            <person name="James R."/>
            <person name="Johnson C."/>
            <person name="Johnson D."/>
            <person name="Joy A."/>
            <person name="Kay M."/>
            <person name="Kershaw J.K."/>
            <person name="Kibukawa M."/>
            <person name="Kimberley A.M."/>
            <person name="King A."/>
            <person name="Knights A.J."/>
            <person name="Lad H."/>
            <person name="Laird G."/>
            <person name="Lawlor S."/>
            <person name="Leongamornlert D.A."/>
            <person name="Lloyd D.M."/>
            <person name="Loveland J."/>
            <person name="Lovell J."/>
            <person name="Lush M.J."/>
            <person name="Lyne R."/>
            <person name="Martin S."/>
            <person name="Mashreghi-Mohammadi M."/>
            <person name="Matthews L."/>
            <person name="Matthews N.S.W."/>
            <person name="McLaren S."/>
            <person name="Milne S."/>
            <person name="Mistry S."/>
            <person name="Moore M.J.F."/>
            <person name="Nickerson T."/>
            <person name="O'Dell C.N."/>
            <person name="Oliver K."/>
            <person name="Palmeiri A."/>
            <person name="Palmer S.A."/>
            <person name="Parker A."/>
            <person name="Patel D."/>
            <person name="Pearce A.V."/>
            <person name="Peck A.I."/>
            <person name="Pelan S."/>
            <person name="Phelps K."/>
            <person name="Phillimore B.J."/>
            <person name="Plumb R."/>
            <person name="Rajan J."/>
            <person name="Raymond C."/>
            <person name="Rouse G."/>
            <person name="Saenphimmachak C."/>
            <person name="Sehra H.K."/>
            <person name="Sheridan E."/>
            <person name="Shownkeen R."/>
            <person name="Sims S."/>
            <person name="Skuce C.D."/>
            <person name="Smith M."/>
            <person name="Steward C."/>
            <person name="Subramanian S."/>
            <person name="Sycamore N."/>
            <person name="Tracey A."/>
            <person name="Tromans A."/>
            <person name="Van Helmond Z."/>
            <person name="Wall M."/>
            <person name="Wallis J.M."/>
            <person name="White S."/>
            <person name="Whitehead S.L."/>
            <person name="Wilkinson J.E."/>
            <person name="Willey D.L."/>
            <person name="Williams H."/>
            <person name="Wilming L."/>
            <person name="Wray P.W."/>
            <person name="Wu Z."/>
            <person name="Coulson A."/>
            <person name="Vaudin M."/>
            <person name="Sulston J.E."/>
            <person name="Durbin R.M."/>
            <person name="Hubbard T."/>
            <person name="Wooster R."/>
            <person name="Dunham I."/>
            <person name="Carter N.P."/>
            <person name="McVean G."/>
            <person name="Ross M.T."/>
            <person name="Harrow J."/>
            <person name="Olson M.V."/>
            <person name="Beck S."/>
            <person name="Rogers J."/>
            <person name="Bentley D.R."/>
        </authorList>
    </citation>
    <scope>NUCLEOTIDE SEQUENCE [LARGE SCALE GENOMIC DNA]</scope>
</reference>
<reference key="3">
    <citation type="journal article" date="1999" name="Proc. Natl. Acad. Sci. U.S.A.">
        <title>A beta-1,3-N-acetylglucosaminyltransferase with poly-N-acetyllactosamine synthase activity is structurally related to beta-1,3-galactosyltransferases.</title>
        <authorList>
            <person name="Zhou D."/>
            <person name="Dinter A."/>
            <person name="Gutierrez Gallego R."/>
            <person name="Kamerling J.P."/>
            <person name="Vliegenthart J.F.G."/>
            <person name="Berger E.G."/>
            <person name="Hennet T."/>
        </authorList>
    </citation>
    <scope>COFACTOR</scope>
</reference>
<reference key="4">
    <citation type="journal article" date="2000" name="Proc. Natl. Acad. Sci. U.S.A.">
        <authorList>
            <person name="Zhou D."/>
            <person name="Dinter A."/>
            <person name="Gutierrez Gallego R."/>
            <person name="Kamerling J.P."/>
            <person name="Vliegenthart J.F.G."/>
            <person name="Berger E.G."/>
            <person name="Hennet T."/>
        </authorList>
    </citation>
    <scope>ERRATUM OF PUBMED:9892646</scope>
</reference>
<reference key="5">
    <citation type="journal article" date="2013" name="Am. J. Hum. Genet.">
        <title>Mutations in B3GALT6, which encodes a glycosaminoglycan linker region enzyme, cause a spectrum of skeletal and connective tissue disorders.</title>
        <authorList>
            <person name="Nakajima M."/>
            <person name="Mizumoto S."/>
            <person name="Miyake N."/>
            <person name="Kogawa R."/>
            <person name="Iida A."/>
            <person name="Ito H."/>
            <person name="Kitoh H."/>
            <person name="Hirayama A."/>
            <person name="Mitsubuchi H."/>
            <person name="Miyazaki O."/>
            <person name="Kosaki R."/>
            <person name="Horikawa R."/>
            <person name="Lai A."/>
            <person name="Mendoza-Londono R."/>
            <person name="Dupuis L."/>
            <person name="Chitayat D."/>
            <person name="Howard A."/>
            <person name="Leal G.F."/>
            <person name="Cavalcanti D."/>
            <person name="Tsurusaki Y."/>
            <person name="Saitsu H."/>
            <person name="Watanabe S."/>
            <person name="Lausch E."/>
            <person name="Unger S."/>
            <person name="Bonafe L."/>
            <person name="Ohashi H."/>
            <person name="Superti-Furga A."/>
            <person name="Matsumoto N."/>
            <person name="Sugahara K."/>
            <person name="Nishimura G."/>
            <person name="Ikegawa S."/>
        </authorList>
    </citation>
    <scope>FUNCTION</scope>
    <scope>CATALYTIC ACTIVITY</scope>
    <scope>SUBCELLULAR LOCATION</scope>
    <scope>INVOLVEMENT IN SEMDJL1</scope>
    <scope>INVOLVEMENT IN EDSSPD2</scope>
    <scope>VARIANTS SEMDJL1 GLY-65; LEU-67; ASN-156; CYS-232 AND SER-300</scope>
    <scope>VARIANTS EDSSPD2 TRP-6; 139-MET--ALA-141 DEL AND THR-309</scope>
    <scope>CHARACTERIZATION OF VARIANTS SEMDJL1 GLY-65; LEU-67; ASN-156; CYS-232 AND SER-300</scope>
</reference>
<reference key="6">
    <citation type="journal article" date="2013" name="Am. J. Hum. Genet.">
        <title>Defective Initiation of Glycosaminoglycan Synthesis due to B3GALT6 Mutations causes a pleiotropic Ehlers-Danlos syndrome-like connective tissue disorder.</title>
        <authorList>
            <person name="Malfait F."/>
            <person name="Kariminejad A."/>
            <person name="Van Damme T."/>
            <person name="Gauche C."/>
            <person name="Syx D."/>
            <person name="Merhi-Soussi F."/>
            <person name="Gulberti S."/>
            <person name="Symoens S."/>
            <person name="Vanhauwaert S."/>
            <person name="Willaert A."/>
            <person name="Bozorgmehr B."/>
            <person name="Kariminejad M.H."/>
            <person name="Ebrahimiadib N."/>
            <person name="Hausser I."/>
            <person name="Huysseune A."/>
            <person name="Fournel-Gigleux S."/>
            <person name="De Paepe A."/>
        </authorList>
    </citation>
    <scope>VARIANTS SEMDJL1 HIS-207 AND SER-217</scope>
</reference>
<reference key="7">
    <citation type="journal article" date="2014" name="Semin. Pediatr. Neurol.">
        <title>A newborn with complex skeletal abnormalities, joint contractures, and bilateral corneal clouding with sclerocornea.</title>
        <authorList>
            <person name="Sellars E.A."/>
            <person name="Bosanko K.A."/>
            <person name="Lepard T."/>
            <person name="Garnica A."/>
            <person name="Schaefer G.B."/>
        </authorList>
    </citation>
    <scope>INVOLVEMENT IN ALGAZ</scope>
    <scope>VARIANTS ALGAZ TYR-159 AND ASP-265</scope>
</reference>
<reference key="8">
    <citation type="journal article" date="2018" name="Clin. Genet.">
        <title>A B3GALT6 variant in patient originally described as Al-Gazali syndrome and implicating the endoplasmic reticulum quality control in the mechanism of some beta3GalT6-pathy mutations.</title>
        <authorList>
            <person name="Ben-Mahmoud A."/>
            <person name="Ben-Salem S."/>
            <person name="Al-Sorkhy M."/>
            <person name="John A."/>
            <person name="Ali B.R."/>
            <person name="Al-Gazali L."/>
        </authorList>
    </citation>
    <scope>FUNCTION</scope>
    <scope>CATALYTIC ACTIVITY</scope>
    <scope>SUBCELLULAR LOCATION</scope>
    <scope>VARIANT ALGAZ TRP-206</scope>
    <scope>CHARACTERIZATION OF VARIANTS ALGAZ TYR-159; TRP-206 AND ASP-265</scope>
    <scope>CHARACTERIZATION OF VARIANTS SEMDJL1 GLY-65; LEU-67; ALA-79; ASN-156; CYS-232; TRP-256 AND SER-300</scope>
    <scope>CHARACTERIZATION OF VARIANTS EDSSPD2 TRP-6; LEU-186; HIS-207; SER-217 AND THR-309</scope>
</reference>
<reference key="9">
    <citation type="journal article" date="2015" name="Clin. Genet.">
        <title>Spondyloepimetaphyseal dysplasia with joint laxity (Beighton type); mutation analysis in eight affected South African families.</title>
        <authorList>
            <person name="Vorster A.A."/>
            <person name="Beighton P."/>
            <person name="Ramesar R.S."/>
        </authorList>
    </citation>
    <scope>VARIANTS SEMDJL1 LEU-67 AND ALA-79</scope>
</reference>
<reference key="10">
    <citation type="journal article" date="2015" name="Mol. Genet. Metab. Rep.">
        <title>Insights in the etiopathology of galactosyltransferase II (GalT-II) deficiency from transcriptome-wide expression profiling of skin fibroblasts of two sisters with compound heterozygosity for two novel B3GALT6 mutations.</title>
        <authorList>
            <person name="Ritelli M."/>
            <person name="Chiarelli N."/>
            <person name="Zoppi N."/>
            <person name="Dordoni C."/>
            <person name="Quinzani S."/>
            <person name="Traversa M."/>
            <person name="Venturini M."/>
            <person name="Calzavara-Pinton P."/>
            <person name="Colombi M."/>
        </authorList>
    </citation>
    <scope>VARIANT SEMDJL1 TRP-256</scope>
</reference>
<reference key="11">
    <citation type="journal article" date="2016" name="Hum. Genet.">
        <title>Expanding the clinical and genetic heterogeneity of hereditary disorders of connective tissue.</title>
        <authorList>
            <person name="Alazami A.M."/>
            <person name="Al-Qattan S.M."/>
            <person name="Faqeih E."/>
            <person name="Alhashem A."/>
            <person name="Alshammari M."/>
            <person name="Alzahrani F."/>
            <person name="Al-Dosari M.S."/>
            <person name="Patel N."/>
            <person name="Alsagheir A."/>
            <person name="Binabbas B."/>
            <person name="Alzaidan H."/>
            <person name="Alsiddiky A."/>
            <person name="Alharbi N."/>
            <person name="Alfadhel M."/>
            <person name="Kentab A."/>
            <person name="Daza R.M."/>
            <person name="Kircher M."/>
            <person name="Shendure J."/>
            <person name="Hashem M."/>
            <person name="Alshahrani S."/>
            <person name="Rahbeeni Z."/>
            <person name="Khalifa O."/>
            <person name="Shaheen R."/>
            <person name="Alkuraya F.S."/>
        </authorList>
    </citation>
    <scope>VARIANT SEMDJL1 LEU-186</scope>
</reference>
<reference key="12">
    <citation type="journal article" date="2018" name="Genet. Med.">
        <title>Expanding the phenome and variome of skeletal dysplasia.</title>
        <authorList>
            <person name="Maddirevula S."/>
            <person name="Alsahli S."/>
            <person name="Alhabeeb L."/>
            <person name="Patel N."/>
            <person name="Alzahrani F."/>
            <person name="Shamseldin H.E."/>
            <person name="Anazi S."/>
            <person name="Ewida N."/>
            <person name="Alsaif H.S."/>
            <person name="Mohamed J.Y."/>
            <person name="Alazami A.M."/>
            <person name="Ibrahim N."/>
            <person name="Abdulwahab F."/>
            <person name="Hashem M."/>
            <person name="Abouelhoda M."/>
            <person name="Monies D."/>
            <person name="Al Tassan N."/>
            <person name="Alshammari M."/>
            <person name="Alsagheir A."/>
            <person name="Seidahmed M.Z."/>
            <person name="Sogati S."/>
            <person name="Aglan M.S."/>
            <person name="Hamad M.H."/>
            <person name="Salih M.A."/>
            <person name="Hamed A.A."/>
            <person name="Alhashmi N."/>
            <person name="Nabil A."/>
            <person name="Alfadli F."/>
            <person name="Abdel-Salam G.M.H."/>
            <person name="Alkuraya H."/>
            <person name="Peitee W.O."/>
            <person name="Keng W.T."/>
            <person name="Qasem A."/>
            <person name="Mushiba A.M."/>
            <person name="Zaki M.S."/>
            <person name="Fassad M.R."/>
            <person name="Alfadhel M."/>
            <person name="Alexander S."/>
            <person name="Sabr Y."/>
            <person name="Temtamy S."/>
            <person name="Ekbote A.V."/>
            <person name="Ismail S."/>
            <person name="Hosny G.A."/>
            <person name="Otaify G.A."/>
            <person name="Amr K."/>
            <person name="Al Tala S."/>
            <person name="Khan A.O."/>
            <person name="Rizk T."/>
            <person name="Alaqeel A."/>
            <person name="Alsiddiky A."/>
            <person name="Singh A."/>
            <person name="Kapoor S."/>
            <person name="Alhashem A."/>
            <person name="Faqeih E."/>
            <person name="Shaheen R."/>
            <person name="Alkuraya F.S."/>
        </authorList>
    </citation>
    <scope>VARIANT SEMDJL1 LEU-186</scope>
    <scope>VARIANT EDSSPD2 LEU-186</scope>
</reference>
<reference key="13">
    <citation type="journal article" date="2018" name="Hum. Mol. Genet.">
        <title>Biallelic B3GALT6 mutations cause spondylodysplastic Ehlers-Danlos syndrome.</title>
        <authorList>
            <person name="Van Damme T."/>
            <person name="Pang X."/>
            <person name="Guillemyn B."/>
            <person name="Gulberti S."/>
            <person name="Syx D."/>
            <person name="De Rycke R."/>
            <person name="Kaye O."/>
            <person name="de Die-Smulders C.E.M."/>
            <person name="Pfundt R."/>
            <person name="Kariminejad A."/>
            <person name="Nampoothiri S."/>
            <person name="Pierquin G."/>
            <person name="Bulk S."/>
            <person name="Larson A.A."/>
            <person name="Chatfield K.C."/>
            <person name="Simon M."/>
            <person name="Legrand A."/>
            <person name="Gerard M."/>
            <person name="Symoens S."/>
            <person name="Fournel-Gigleux S."/>
            <person name="Malfait F."/>
        </authorList>
    </citation>
    <scope>VARIANT EDSSPD2 CYS-182</scope>
</reference>
<feature type="chain" id="PRO_0000219168" description="Beta-1,3-galactosyltransferase 6">
    <location>
        <begin position="1"/>
        <end position="329"/>
    </location>
</feature>
<feature type="topological domain" description="Cytoplasmic" evidence="1">
    <location>
        <begin position="1"/>
        <end position="11"/>
    </location>
</feature>
<feature type="transmembrane region" description="Helical; Signal-anchor for type II membrane protein" evidence="1">
    <location>
        <begin position="12"/>
        <end position="34"/>
    </location>
</feature>
<feature type="topological domain" description="Lumenal" evidence="1">
    <location>
        <begin position="35"/>
        <end position="329"/>
    </location>
</feature>
<feature type="glycosylation site" description="N-linked (GlcNAc...) asparagine" evidence="1">
    <location>
        <position position="131"/>
    </location>
</feature>
<feature type="sequence variant" id="VAR_070132" description="In EDSSPD2; no effect on Golgi apparatus subcellular localization; dbSNP:rs397514722." evidence="3 9">
    <original>R</original>
    <variation>W</variation>
    <location>
        <position position="6"/>
    </location>
</feature>
<feature type="sequence variant" id="VAR_070133" description="In SEMDJL1; decreased galactosylxylosylprotein 3-beta-galactosyltransferase activity; decreased localization to the Golgi apparatus; dbSNP:rs397514719." evidence="3 9">
    <original>S</original>
    <variation>G</variation>
    <location>
        <position position="65"/>
    </location>
</feature>
<feature type="sequence variant" id="VAR_070134" description="In SEMDJL1; loss of galactosylxylosylprotein 3-beta-galactosyltransferase activity; decreased localization to the Golgi apparatus; dbSNP:rs397514720." evidence="3 5 9">
    <original>P</original>
    <variation>L</variation>
    <location>
        <position position="67"/>
    </location>
</feature>
<feature type="sequence variant" id="VAR_084154" description="In SEMDJL1; decreased localization to the Golgi apparatus; dbSNP:rs1638540007." evidence="5 9">
    <original>T</original>
    <variation>A</variation>
    <location>
        <position position="79"/>
    </location>
</feature>
<feature type="sequence variant" id="VAR_070135" description="In EDSSPD2." evidence="3">
    <location>
        <begin position="139"/>
        <end position="141"/>
    </location>
</feature>
<feature type="sequence variant" id="VAR_070136" description="In SEMDJL1; loss of galactosylxylosylprotein 3-beta-galactosyltransferase activity; normal Golgi apparatus subcellular localization; dbSNP:rs397514718." evidence="3 9">
    <original>D</original>
    <variation>N</variation>
    <location>
        <position position="156"/>
    </location>
</feature>
<feature type="sequence variant" id="VAR_084155" description="In ALGAZ; uncertain significance; normal Golgi apparatus subcellular localization; dbSNP:rs1360531002." evidence="6 9">
    <original>S</original>
    <variation>Y</variation>
    <location>
        <position position="159"/>
    </location>
</feature>
<feature type="sequence variant" id="VAR_059317" description="In dbSNP:rs12085009.">
    <original>E</original>
    <variation>D</variation>
    <location>
        <position position="174"/>
    </location>
</feature>
<feature type="sequence variant" id="VAR_084156" description="In EDSSPD2; uncertain significance; dbSNP:rs1314046622." evidence="11">
    <original>Y</original>
    <variation>C</variation>
    <location>
        <position position="182"/>
    </location>
</feature>
<feature type="sequence variant" id="VAR_084157" description="In SEMDJL1; also found in patients with EDSSPD2; decreased localization to the Golgi apparatus; dbSNP:rs1553151294." evidence="7 9 10">
    <original>F</original>
    <variation>L</variation>
    <location>
        <position position="186"/>
    </location>
</feature>
<feature type="sequence variant" id="VAR_084158" description="In ALGAZ; normal Golgi apparatus subcellular localization; proteoglycans maturation altered; dbSNP:rs763080896." evidence="9">
    <original>C</original>
    <variation>W</variation>
    <location>
        <position position="206"/>
    </location>
</feature>
<feature type="sequence variant" id="VAR_070137" description="In SEMDJL1; normal Golgi apparatus subcellular localization; dbSNP:rs397514723." evidence="4 9">
    <original>D</original>
    <variation>H</variation>
    <location>
        <position position="207"/>
    </location>
</feature>
<feature type="sequence variant" id="VAR_070138" description="In SEMDJL1; normal Golgi apparatus subcellular localization; dbSNP:rs397514724." evidence="4 9">
    <original>G</original>
    <variation>S</variation>
    <location>
        <position position="217"/>
    </location>
</feature>
<feature type="sequence variant" id="VAR_070139" description="In SEMDJL1; the activity of the enzyme is significantly decreased; decreased localization to the Golgi apparatus; dbSNP:rs397514717." evidence="3 9">
    <original>R</original>
    <variation>C</variation>
    <location>
        <position position="232"/>
    </location>
</feature>
<feature type="sequence variant" id="VAR_084159" description="In SEMDJL1; decreased localization to the Golgi apparatus; dbSNP:rs1638566519." evidence="8 9">
    <original>R</original>
    <variation>W</variation>
    <location>
        <position position="256"/>
    </location>
</feature>
<feature type="sequence variant" id="VAR_084160" description="In ALGAZ; uncertain significance; normal Golgi apparatus subcellular localization; dbSNP:rs374677519." evidence="6 9">
    <original>E</original>
    <variation>D</variation>
    <location>
        <position position="265"/>
    </location>
</feature>
<feature type="sequence variant" id="VAR_070140" description="In SEMDJL1; loss of galactosylxylosylprotein 3-beta-galactosyltransferase activity; normal Golgi apparatus subcellular localization; dbSNP:rs786200939." evidence="3 9">
    <original>C</original>
    <variation>S</variation>
    <location>
        <position position="300"/>
    </location>
</feature>
<feature type="sequence variant" id="VAR_070141" description="In EDSSPD2; normal Golgi apparatus subcellular localization; dbSNP:rs397514721." evidence="3 9">
    <original>S</original>
    <variation>T</variation>
    <location>
        <position position="309"/>
    </location>
</feature>
<feature type="sequence conflict" description="In Ref. 1; AAL11442." evidence="14" ref="1">
    <original>K</original>
    <variation>N</variation>
    <location>
        <position position="2"/>
    </location>
</feature>
<sequence>MKLLRRAWRRRAALGLGTLALCGAALLYLARCAAEPGDPRAMSGRSPPPPAPARAAAFLAVLVASAPRAAERRSVIRSTWLARRGAPGDVWARFAVGTAGLGAEERRALEREQARHGDLLLLPALRDAYENLTAKVLAMLAWLDEHVAFEFVLKADDDSFARLDALLAELRAREPARRRRLYWGFFSGRGRVKPGGRWREAAWQLCDYYLPYALGGGYVLSADLVHYLRLSRDYLRAWHSEDVSLGAWLAPVDVQREHDPRFDTEYRSRGCSNQYLVTHKQSLEDMLEKHATLAREGRLCKREVQLRLSYVYDWSAPPSQCCQRREGIP</sequence>
<organism>
    <name type="scientific">Homo sapiens</name>
    <name type="common">Human</name>
    <dbReference type="NCBI Taxonomy" id="9606"/>
    <lineage>
        <taxon>Eukaryota</taxon>
        <taxon>Metazoa</taxon>
        <taxon>Chordata</taxon>
        <taxon>Craniata</taxon>
        <taxon>Vertebrata</taxon>
        <taxon>Euteleostomi</taxon>
        <taxon>Mammalia</taxon>
        <taxon>Eutheria</taxon>
        <taxon>Euarchontoglires</taxon>
        <taxon>Primates</taxon>
        <taxon>Haplorrhini</taxon>
        <taxon>Catarrhini</taxon>
        <taxon>Hominidae</taxon>
        <taxon>Homo</taxon>
    </lineage>
</organism>